<gene>
    <name type="primary">trmB</name>
    <name type="synonym">trmI</name>
    <name type="synonym">yggH</name>
    <name type="ordered locus">b2960</name>
    <name type="ordered locus">JW2927</name>
</gene>
<evidence type="ECO:0000250" key="1">
    <source>
        <dbReference type="UniProtKB" id="Q12009"/>
    </source>
</evidence>
<evidence type="ECO:0000255" key="2">
    <source>
        <dbReference type="HAMAP-Rule" id="MF_01057"/>
    </source>
</evidence>
<evidence type="ECO:0000269" key="3">
    <source>
    </source>
</evidence>
<evidence type="ECO:0000269" key="4">
    <source>
    </source>
</evidence>
<evidence type="ECO:0000303" key="5">
    <source>
    </source>
</evidence>
<evidence type="ECO:0000305" key="6"/>
<evidence type="ECO:0000305" key="7">
    <source>
    </source>
</evidence>
<evidence type="ECO:0007829" key="8">
    <source>
        <dbReference type="PDB" id="3DXY"/>
    </source>
</evidence>
<accession>P0A8I5</accession>
<accession>P32049</accession>
<accession>P58089</accession>
<accession>Q2M9N3</accession>
<reference key="1">
    <citation type="journal article" date="1991" name="J. Bacteriol.">
        <title>Nucleotide sequence of the Escherichia coli micA gene required for A/G-specific mismatch repair: identity of micA and mutY.</title>
        <authorList>
            <person name="Tsai-Wu J.-J."/>
            <person name="Radicella J.P."/>
            <person name="Lu A.-L."/>
        </authorList>
    </citation>
    <scope>NUCLEOTIDE SEQUENCE [GENOMIC DNA]</scope>
    <source>
        <strain>K12</strain>
    </source>
</reference>
<reference key="2">
    <citation type="journal article" date="1997" name="Science">
        <title>The complete genome sequence of Escherichia coli K-12.</title>
        <authorList>
            <person name="Blattner F.R."/>
            <person name="Plunkett G. III"/>
            <person name="Bloch C.A."/>
            <person name="Perna N.T."/>
            <person name="Burland V."/>
            <person name="Riley M."/>
            <person name="Collado-Vides J."/>
            <person name="Glasner J.D."/>
            <person name="Rode C.K."/>
            <person name="Mayhew G.F."/>
            <person name="Gregor J."/>
            <person name="Davis N.W."/>
            <person name="Kirkpatrick H.A."/>
            <person name="Goeden M.A."/>
            <person name="Rose D.J."/>
            <person name="Mau B."/>
            <person name="Shao Y."/>
        </authorList>
    </citation>
    <scope>NUCLEOTIDE SEQUENCE [LARGE SCALE GENOMIC DNA]</scope>
    <source>
        <strain>K12 / MG1655 / ATCC 47076</strain>
    </source>
</reference>
<reference key="3">
    <citation type="journal article" date="2006" name="Mol. Syst. Biol.">
        <title>Highly accurate genome sequences of Escherichia coli K-12 strains MG1655 and W3110.</title>
        <authorList>
            <person name="Hayashi K."/>
            <person name="Morooka N."/>
            <person name="Yamamoto Y."/>
            <person name="Fujita K."/>
            <person name="Isono K."/>
            <person name="Choi S."/>
            <person name="Ohtsubo E."/>
            <person name="Baba T."/>
            <person name="Wanner B.L."/>
            <person name="Mori H."/>
            <person name="Horiuchi T."/>
        </authorList>
    </citation>
    <scope>NUCLEOTIDE SEQUENCE [LARGE SCALE GENOMIC DNA]</scope>
    <source>
        <strain>K12 / W3110 / ATCC 27325 / DSM 5911</strain>
    </source>
</reference>
<reference key="4">
    <citation type="journal article" date="2003" name="J. Bacteriol.">
        <title>The yggH gene of Escherichia coli encodes a tRNA (m7G46) methyltransferase.</title>
        <authorList>
            <person name="De Bie L.G.S."/>
            <person name="Roovers M."/>
            <person name="Oudjama Y."/>
            <person name="Wattiez R."/>
            <person name="Tricot C."/>
            <person name="Stalon V."/>
            <person name="Droogmans L."/>
            <person name="Bujnicki J.M."/>
        </authorList>
    </citation>
    <scope>FUNCTION</scope>
    <scope>CATALYTIC ACTIVITY</scope>
    <scope>PATHWAY</scope>
    <scope>SUBUNIT</scope>
    <source>
        <strain>K12 / XL1-Blue</strain>
    </source>
</reference>
<reference key="5">
    <citation type="journal article" date="2005" name="Proteins">
        <title>Sequence-structure-function relationships of a tRNA (m7G46) methyltransferase studied by homology modeling and site-directed mutagenesis.</title>
        <authorList>
            <person name="Purta E."/>
            <person name="van Vliet F."/>
            <person name="Tricot C."/>
            <person name="De Bie L.G."/>
            <person name="Feder M."/>
            <person name="Skowronek K."/>
            <person name="Droogmans L."/>
            <person name="Bujnicki J.M."/>
        </authorList>
    </citation>
    <scope>MUTAGENESIS OF ARG-26; ASP-144; ARG-150; HIS-151; ASN-152; ARG-154; ARG-155; ASP-180; THR-217 AND GLU-220</scope>
</reference>
<comment type="function">
    <text evidence="2 3">Catalyzes the formation of N(7)-methylguanine at position 46 (m7G46) in tRNA.</text>
</comment>
<comment type="catalytic activity">
    <reaction evidence="2 3">
        <text>guanosine(46) in tRNA + S-adenosyl-L-methionine = N(7)-methylguanosine(46) in tRNA + S-adenosyl-L-homocysteine</text>
        <dbReference type="Rhea" id="RHEA:42708"/>
        <dbReference type="Rhea" id="RHEA-COMP:10188"/>
        <dbReference type="Rhea" id="RHEA-COMP:10189"/>
        <dbReference type="ChEBI" id="CHEBI:57856"/>
        <dbReference type="ChEBI" id="CHEBI:59789"/>
        <dbReference type="ChEBI" id="CHEBI:74269"/>
        <dbReference type="ChEBI" id="CHEBI:74480"/>
        <dbReference type="EC" id="2.1.1.33"/>
    </reaction>
</comment>
<comment type="pathway">
    <text evidence="2 7">tRNA modification; N(7)-methylguanine-tRNA biosynthesis.</text>
</comment>
<comment type="subunit">
    <text evidence="2 3">Monomer.</text>
</comment>
<comment type="similarity">
    <text evidence="2 6">Belongs to the class I-like SAM-binding methyltransferase superfamily. TrmB family.</text>
</comment>
<comment type="sequence caution" evidence="6">
    <conflict type="frameshift">
        <sequence resource="EMBL-CDS" id="AAA72956"/>
    </conflict>
</comment>
<organism>
    <name type="scientific">Escherichia coli (strain K12)</name>
    <dbReference type="NCBI Taxonomy" id="83333"/>
    <lineage>
        <taxon>Bacteria</taxon>
        <taxon>Pseudomonadati</taxon>
        <taxon>Pseudomonadota</taxon>
        <taxon>Gammaproteobacteria</taxon>
        <taxon>Enterobacterales</taxon>
        <taxon>Enterobacteriaceae</taxon>
        <taxon>Escherichia</taxon>
    </lineage>
</organism>
<dbReference type="EC" id="2.1.1.33" evidence="2 3"/>
<dbReference type="EMBL" id="M59471">
    <property type="protein sequence ID" value="AAA72956.1"/>
    <property type="status" value="ALT_FRAME"/>
    <property type="molecule type" value="Genomic_DNA"/>
</dbReference>
<dbReference type="EMBL" id="U28377">
    <property type="protein sequence ID" value="AAA69127.1"/>
    <property type="molecule type" value="Genomic_DNA"/>
</dbReference>
<dbReference type="EMBL" id="U00096">
    <property type="protein sequence ID" value="AAC75997.1"/>
    <property type="molecule type" value="Genomic_DNA"/>
</dbReference>
<dbReference type="EMBL" id="AP009048">
    <property type="protein sequence ID" value="BAE77023.1"/>
    <property type="molecule type" value="Genomic_DNA"/>
</dbReference>
<dbReference type="PIR" id="G65081">
    <property type="entry name" value="G65081"/>
</dbReference>
<dbReference type="RefSeq" id="NP_417435.1">
    <property type="nucleotide sequence ID" value="NC_000913.3"/>
</dbReference>
<dbReference type="RefSeq" id="WP_000786911.1">
    <property type="nucleotide sequence ID" value="NZ_STEB01000001.1"/>
</dbReference>
<dbReference type="PDB" id="3DXX">
    <property type="method" value="X-ray"/>
    <property type="resolution" value="2.05 A"/>
    <property type="chains" value="A=33-239"/>
</dbReference>
<dbReference type="PDB" id="3DXY">
    <property type="method" value="X-ray"/>
    <property type="resolution" value="1.50 A"/>
    <property type="chains" value="A=33-239"/>
</dbReference>
<dbReference type="PDB" id="3DXZ">
    <property type="method" value="X-ray"/>
    <property type="resolution" value="1.58 A"/>
    <property type="chains" value="A=33-239"/>
</dbReference>
<dbReference type="PDBsum" id="3DXX"/>
<dbReference type="PDBsum" id="3DXY"/>
<dbReference type="PDBsum" id="3DXZ"/>
<dbReference type="SMR" id="P0A8I5"/>
<dbReference type="BioGRID" id="4262358">
    <property type="interactions" value="19"/>
</dbReference>
<dbReference type="DIP" id="DIP-36015N"/>
<dbReference type="FunCoup" id="P0A8I5">
    <property type="interactions" value="452"/>
</dbReference>
<dbReference type="IntAct" id="P0A8I5">
    <property type="interactions" value="45"/>
</dbReference>
<dbReference type="STRING" id="511145.b2960"/>
<dbReference type="jPOST" id="P0A8I5"/>
<dbReference type="PaxDb" id="511145-b2960"/>
<dbReference type="EnsemblBacteria" id="AAC75997">
    <property type="protein sequence ID" value="AAC75997"/>
    <property type="gene ID" value="b2960"/>
</dbReference>
<dbReference type="GeneID" id="93779031"/>
<dbReference type="GeneID" id="947448"/>
<dbReference type="KEGG" id="ecj:JW2927"/>
<dbReference type="KEGG" id="eco:b2960"/>
<dbReference type="KEGG" id="ecoc:C3026_16200"/>
<dbReference type="PATRIC" id="fig|1411691.4.peg.3771"/>
<dbReference type="EchoBASE" id="EB1727"/>
<dbReference type="eggNOG" id="COG0220">
    <property type="taxonomic scope" value="Bacteria"/>
</dbReference>
<dbReference type="HOGENOM" id="CLU_050910_0_1_6"/>
<dbReference type="InParanoid" id="P0A8I5"/>
<dbReference type="OMA" id="PDPWHKS"/>
<dbReference type="OrthoDB" id="9802090at2"/>
<dbReference type="PhylomeDB" id="P0A8I5"/>
<dbReference type="BioCyc" id="EcoCyc:EG11779-MONOMER"/>
<dbReference type="BioCyc" id="MetaCyc:EG11779-MONOMER"/>
<dbReference type="BRENDA" id="2.1.1.33">
    <property type="organism ID" value="2026"/>
</dbReference>
<dbReference type="UniPathway" id="UPA00989"/>
<dbReference type="EvolutionaryTrace" id="P0A8I5"/>
<dbReference type="PRO" id="PR:P0A8I5"/>
<dbReference type="Proteomes" id="UP000000625">
    <property type="component" value="Chromosome"/>
</dbReference>
<dbReference type="GO" id="GO:0043527">
    <property type="term" value="C:tRNA methyltransferase complex"/>
    <property type="evidence" value="ECO:0000318"/>
    <property type="project" value="GO_Central"/>
</dbReference>
<dbReference type="GO" id="GO:0008176">
    <property type="term" value="F:tRNA (guanine(46)-N7)-methyltransferase activity"/>
    <property type="evidence" value="ECO:0000314"/>
    <property type="project" value="EcoCyc"/>
</dbReference>
<dbReference type="GO" id="GO:0036265">
    <property type="term" value="P:RNA (guanine-N7)-methylation"/>
    <property type="evidence" value="ECO:0000318"/>
    <property type="project" value="GO_Central"/>
</dbReference>
<dbReference type="GO" id="GO:0106004">
    <property type="term" value="P:tRNA (guanine-N7)-methylation"/>
    <property type="evidence" value="ECO:0000315"/>
    <property type="project" value="EcoCyc"/>
</dbReference>
<dbReference type="GO" id="GO:0030488">
    <property type="term" value="P:tRNA methylation"/>
    <property type="evidence" value="ECO:0000315"/>
    <property type="project" value="EcoCyc"/>
</dbReference>
<dbReference type="FunFam" id="3.40.50.150:FF:000024">
    <property type="entry name" value="tRNA (guanine-N(7)-)-methyltransferase"/>
    <property type="match status" value="1"/>
</dbReference>
<dbReference type="Gene3D" id="3.40.50.150">
    <property type="entry name" value="Vaccinia Virus protein VP39"/>
    <property type="match status" value="1"/>
</dbReference>
<dbReference type="HAMAP" id="MF_01057">
    <property type="entry name" value="tRNA_methyltr_TrmB"/>
    <property type="match status" value="1"/>
</dbReference>
<dbReference type="InterPro" id="IPR029063">
    <property type="entry name" value="SAM-dependent_MTases_sf"/>
</dbReference>
<dbReference type="InterPro" id="IPR003358">
    <property type="entry name" value="tRNA_(Gua-N-7)_MeTrfase_Trmb"/>
</dbReference>
<dbReference type="InterPro" id="IPR055361">
    <property type="entry name" value="tRNA_methyltr_TrmB_bact"/>
</dbReference>
<dbReference type="NCBIfam" id="TIGR00091">
    <property type="entry name" value="tRNA (guanosine(46)-N7)-methyltransferase TrmB"/>
    <property type="match status" value="1"/>
</dbReference>
<dbReference type="PANTHER" id="PTHR23417">
    <property type="entry name" value="3-DEOXY-D-MANNO-OCTULOSONIC-ACID TRANSFERASE/TRNA GUANINE-N 7 - -METHYLTRANSFERASE"/>
    <property type="match status" value="1"/>
</dbReference>
<dbReference type="PANTHER" id="PTHR23417:SF14">
    <property type="entry name" value="PENTACOTRIPEPTIDE-REPEAT REGION OF PRORP DOMAIN-CONTAINING PROTEIN"/>
    <property type="match status" value="1"/>
</dbReference>
<dbReference type="Pfam" id="PF02390">
    <property type="entry name" value="Methyltransf_4"/>
    <property type="match status" value="1"/>
</dbReference>
<dbReference type="SUPFAM" id="SSF53335">
    <property type="entry name" value="S-adenosyl-L-methionine-dependent methyltransferases"/>
    <property type="match status" value="1"/>
</dbReference>
<dbReference type="PROSITE" id="PS51625">
    <property type="entry name" value="SAM_MT_TRMB"/>
    <property type="match status" value="1"/>
</dbReference>
<feature type="chain" id="PRO_0000171326" description="tRNA (guanine-N(7)-)-methyltransferase">
    <location>
        <begin position="1"/>
        <end position="239"/>
    </location>
</feature>
<feature type="region of interest" description="Interaction with RNA" evidence="2">
    <location>
        <begin position="150"/>
        <end position="155"/>
    </location>
</feature>
<feature type="active site" evidence="1">
    <location>
        <position position="144"/>
    </location>
</feature>
<feature type="binding site" evidence="2">
    <location>
        <position position="69"/>
    </location>
    <ligand>
        <name>S-adenosyl-L-methionine</name>
        <dbReference type="ChEBI" id="CHEBI:59789"/>
    </ligand>
</feature>
<feature type="binding site" evidence="2">
    <location>
        <position position="94"/>
    </location>
    <ligand>
        <name>S-adenosyl-L-methionine</name>
        <dbReference type="ChEBI" id="CHEBI:59789"/>
    </ligand>
</feature>
<feature type="binding site" evidence="2">
    <location>
        <position position="121"/>
    </location>
    <ligand>
        <name>S-adenosyl-L-methionine</name>
        <dbReference type="ChEBI" id="CHEBI:59789"/>
    </ligand>
</feature>
<feature type="binding site" evidence="2">
    <location>
        <position position="144"/>
    </location>
    <ligand>
        <name>S-adenosyl-L-methionine</name>
        <dbReference type="ChEBI" id="CHEBI:59789"/>
    </ligand>
</feature>
<feature type="binding site" evidence="2">
    <location>
        <position position="148"/>
    </location>
    <ligand>
        <name>substrate</name>
    </ligand>
</feature>
<feature type="binding site" evidence="2">
    <location>
        <position position="180"/>
    </location>
    <ligand>
        <name>substrate</name>
    </ligand>
</feature>
<feature type="binding site" evidence="2">
    <location>
        <begin position="217"/>
        <end position="220"/>
    </location>
    <ligand>
        <name>substrate</name>
    </ligand>
</feature>
<feature type="mutagenesis site" description="Reduces catalytic activity over 10-fold." evidence="4">
    <original>R</original>
    <variation>A</variation>
    <location>
        <position position="26"/>
    </location>
</feature>
<feature type="mutagenesis site" description="Loss of activity." evidence="4">
    <original>D</original>
    <variation>A</variation>
    <location>
        <position position="144"/>
    </location>
</feature>
<feature type="mutagenesis site" description="Reduces catalytic activity about 3-fold." evidence="4">
    <original>R</original>
    <variation>A</variation>
    <location>
        <position position="150"/>
    </location>
</feature>
<feature type="mutagenesis site" description="Reduces catalytic activity over 10-fold." evidence="4">
    <original>H</original>
    <variation>A</variation>
    <location>
        <position position="151"/>
    </location>
</feature>
<feature type="mutagenesis site" description="No effect." evidence="4">
    <original>N</original>
    <variation>A</variation>
    <location>
        <position position="152"/>
    </location>
</feature>
<feature type="mutagenesis site" description="Loss of activity." evidence="4">
    <original>R</original>
    <variation>A</variation>
    <location>
        <position position="154"/>
    </location>
</feature>
<feature type="mutagenesis site" description="Loss of activity." evidence="4">
    <original>R</original>
    <variation>A</variation>
    <location>
        <position position="155"/>
    </location>
</feature>
<feature type="mutagenesis site" description="Reduces catalytic activity over 10-fold." evidence="4">
    <original>D</original>
    <variation>A</variation>
    <location>
        <position position="180"/>
    </location>
</feature>
<feature type="mutagenesis site" description="Reduces catalytic activity over 10-fold." evidence="4">
    <original>T</original>
    <variation>A</variation>
    <location>
        <position position="217"/>
    </location>
</feature>
<feature type="mutagenesis site" description="Reduces catalytic activity 10-fold." evidence="4">
    <original>E</original>
    <variation>A</variation>
    <location>
        <position position="220"/>
    </location>
</feature>
<feature type="helix" evidence="8">
    <location>
        <begin position="37"/>
        <end position="45"/>
    </location>
</feature>
<feature type="helix" evidence="8">
    <location>
        <begin position="56"/>
        <end position="60"/>
    </location>
</feature>
<feature type="strand" evidence="8">
    <location>
        <begin position="66"/>
        <end position="71"/>
    </location>
</feature>
<feature type="helix" evidence="8">
    <location>
        <begin position="76"/>
        <end position="84"/>
    </location>
</feature>
<feature type="strand" evidence="8">
    <location>
        <begin position="88"/>
        <end position="93"/>
    </location>
</feature>
<feature type="helix" evidence="8">
    <location>
        <begin position="97"/>
        <end position="109"/>
    </location>
</feature>
<feature type="strand" evidence="8">
    <location>
        <begin position="113"/>
        <end position="118"/>
    </location>
</feature>
<feature type="helix" evidence="8">
    <location>
        <begin position="122"/>
        <end position="129"/>
    </location>
</feature>
<feature type="strand" evidence="8">
    <location>
        <begin position="135"/>
        <end position="142"/>
    </location>
</feature>
<feature type="helix" evidence="8">
    <location>
        <begin position="149"/>
        <end position="154"/>
    </location>
</feature>
<feature type="helix" evidence="8">
    <location>
        <begin position="159"/>
        <end position="168"/>
    </location>
</feature>
<feature type="strand" evidence="8">
    <location>
        <begin position="169"/>
        <end position="180"/>
    </location>
</feature>
<feature type="helix" evidence="8">
    <location>
        <begin position="182"/>
        <end position="193"/>
    </location>
</feature>
<feature type="strand" evidence="8">
    <location>
        <begin position="198"/>
        <end position="200"/>
    </location>
</feature>
<feature type="strand" evidence="8">
    <location>
        <begin position="231"/>
        <end position="237"/>
    </location>
</feature>
<protein>
    <recommendedName>
        <fullName evidence="2">tRNA (guanine-N(7)-)-methyltransferase</fullName>
        <ecNumber evidence="2 3">2.1.1.33</ecNumber>
    </recommendedName>
    <alternativeName>
        <fullName evidence="2">tRNA (guanine(46)-N(7))-methyltransferase</fullName>
    </alternativeName>
    <alternativeName>
        <fullName evidence="2 5">tRNA(m7G46)-methyltransferase</fullName>
    </alternativeName>
</protein>
<name>TRMB_ECOLI</name>
<sequence>MKNDVISPEFDENGRPLRRIRSFVRRQGRLTKGQEHALENYWPVMGVEFSEDMLDFPALFGREAPVTLEIGFGMGASLVAMAKDRPEQDFLGIEVHSPGVGACLASAHEEGLSNLRVMCHDAVEVLHKMIPDNSLRMVQLFFPDPWHKARHNKRRIVQVPFAELVKSKLQLGGVFHMATDWEPYAEHMLEVMSSIDGYKNLSESNDYVPRPASRPVTKFEQRGHRLGHGVWDLMFERVK</sequence>
<proteinExistence type="evidence at protein level"/>
<keyword id="KW-0002">3D-structure</keyword>
<keyword id="KW-0489">Methyltransferase</keyword>
<keyword id="KW-1185">Reference proteome</keyword>
<keyword id="KW-0949">S-adenosyl-L-methionine</keyword>
<keyword id="KW-0808">Transferase</keyword>
<keyword id="KW-0819">tRNA processing</keyword>